<name>CNR14_CAEEL</name>
<evidence type="ECO:0000255" key="1">
    <source>
        <dbReference type="PROSITE-ProRule" id="PRU00407"/>
    </source>
</evidence>
<evidence type="ECO:0000255" key="2">
    <source>
        <dbReference type="PROSITE-ProRule" id="PRU01189"/>
    </source>
</evidence>
<evidence type="ECO:0000256" key="3">
    <source>
        <dbReference type="SAM" id="MobiDB-lite"/>
    </source>
</evidence>
<evidence type="ECO:0000269" key="4">
    <source>
    </source>
</evidence>
<evidence type="ECO:0000269" key="5">
    <source>
    </source>
</evidence>
<evidence type="ECO:0000269" key="6">
    <source>
    </source>
</evidence>
<evidence type="ECO:0000269" key="7">
    <source>
    </source>
</evidence>
<evidence type="ECO:0000269" key="8">
    <source>
    </source>
</evidence>
<evidence type="ECO:0000305" key="9"/>
<evidence type="ECO:0000305" key="10">
    <source>
    </source>
</evidence>
<evidence type="ECO:0000312" key="11">
    <source>
        <dbReference type="WormBase" id="F44A6.2"/>
    </source>
</evidence>
<dbReference type="EMBL" id="U13074">
    <property type="protein sequence ID" value="AAA96982.1"/>
    <property type="molecule type" value="mRNA"/>
</dbReference>
<dbReference type="EMBL" id="BX284606">
    <property type="protein sequence ID" value="CAA90722.1"/>
    <property type="molecule type" value="Genomic_DNA"/>
</dbReference>
<dbReference type="PIR" id="T22154">
    <property type="entry name" value="T22154"/>
</dbReference>
<dbReference type="RefSeq" id="NP_001024662.1">
    <property type="nucleotide sequence ID" value="NM_001029491.5"/>
</dbReference>
<dbReference type="SMR" id="P41830"/>
<dbReference type="BioGRID" id="46145">
    <property type="interactions" value="30"/>
</dbReference>
<dbReference type="DIP" id="DIP-24967N"/>
<dbReference type="FunCoup" id="P41830">
    <property type="interactions" value="876"/>
</dbReference>
<dbReference type="IntAct" id="P41830">
    <property type="interactions" value="15"/>
</dbReference>
<dbReference type="STRING" id="6239.F44A6.2.2"/>
<dbReference type="PaxDb" id="6239-F44A6.2.1"/>
<dbReference type="PeptideAtlas" id="P41830"/>
<dbReference type="EnsemblMetazoa" id="F44A6.2.1">
    <property type="protein sequence ID" value="F44A6.2.1"/>
    <property type="gene ID" value="WBGene00004786"/>
</dbReference>
<dbReference type="GeneID" id="181231"/>
<dbReference type="KEGG" id="cel:CELE_F44A6.2"/>
<dbReference type="UCSC" id="F44A6.2.1">
    <property type="organism name" value="c. elegans"/>
</dbReference>
<dbReference type="AGR" id="WB:WBGene00004786"/>
<dbReference type="CTD" id="181231"/>
<dbReference type="WormBase" id="F44A6.2">
    <property type="protein sequence ID" value="CE03323"/>
    <property type="gene ID" value="WBGene00004786"/>
    <property type="gene designation" value="sex-1"/>
</dbReference>
<dbReference type="eggNOG" id="KOG4846">
    <property type="taxonomic scope" value="Eukaryota"/>
</dbReference>
<dbReference type="GeneTree" id="ENSGT00940000174451"/>
<dbReference type="HOGENOM" id="CLU_040350_0_0_1"/>
<dbReference type="InParanoid" id="P41830"/>
<dbReference type="OMA" id="RKIDYRC"/>
<dbReference type="OrthoDB" id="6081310at2759"/>
<dbReference type="PhylomeDB" id="P41830"/>
<dbReference type="Reactome" id="R-CEL-200425">
    <property type="pathway name" value="Carnitine shuttle"/>
</dbReference>
<dbReference type="Reactome" id="R-CEL-381340">
    <property type="pathway name" value="Transcriptional regulation of white adipocyte differentiation"/>
</dbReference>
<dbReference type="Reactome" id="R-CEL-383280">
    <property type="pathway name" value="Nuclear Receptor transcription pathway"/>
</dbReference>
<dbReference type="Reactome" id="R-CEL-400206">
    <property type="pathway name" value="Regulation of lipid metabolism by PPARalpha"/>
</dbReference>
<dbReference type="Reactome" id="R-CEL-4090294">
    <property type="pathway name" value="SUMOylation of intracellular receptors"/>
</dbReference>
<dbReference type="Reactome" id="R-CEL-5362517">
    <property type="pathway name" value="Signaling by Retinoic Acid"/>
</dbReference>
<dbReference type="Reactome" id="R-CEL-9616222">
    <property type="pathway name" value="Transcriptional regulation of granulopoiesis"/>
</dbReference>
<dbReference type="Reactome" id="R-CEL-9841922">
    <property type="pathway name" value="MLL4 and MLL3 complexes regulate expression of PPARG target genes in adipogenesis and hepatic steatosis"/>
</dbReference>
<dbReference type="SignaLink" id="P41830"/>
<dbReference type="PRO" id="PR:P41830"/>
<dbReference type="Proteomes" id="UP000001940">
    <property type="component" value="Chromosome X"/>
</dbReference>
<dbReference type="Bgee" id="WBGene00004786">
    <property type="expression patterns" value="Expressed in embryo and 4 other cell types or tissues"/>
</dbReference>
<dbReference type="GO" id="GO:0005634">
    <property type="term" value="C:nucleus"/>
    <property type="evidence" value="ECO:0000314"/>
    <property type="project" value="WormBase"/>
</dbReference>
<dbReference type="GO" id="GO:0003700">
    <property type="term" value="F:DNA-binding transcription factor activity"/>
    <property type="evidence" value="ECO:0000250"/>
    <property type="project" value="WormBase"/>
</dbReference>
<dbReference type="GO" id="GO:0004879">
    <property type="term" value="F:nuclear receptor activity"/>
    <property type="evidence" value="ECO:0000318"/>
    <property type="project" value="GO_Central"/>
</dbReference>
<dbReference type="GO" id="GO:0000978">
    <property type="term" value="F:RNA polymerase II cis-regulatory region sequence-specific DNA binding"/>
    <property type="evidence" value="ECO:0000318"/>
    <property type="project" value="GO_Central"/>
</dbReference>
<dbReference type="GO" id="GO:0000977">
    <property type="term" value="F:RNA polymerase II transcription regulatory region sequence-specific DNA binding"/>
    <property type="evidence" value="ECO:0000314"/>
    <property type="project" value="WormBase"/>
</dbReference>
<dbReference type="GO" id="GO:0008270">
    <property type="term" value="F:zinc ion binding"/>
    <property type="evidence" value="ECO:0007669"/>
    <property type="project" value="UniProtKB-KW"/>
</dbReference>
<dbReference type="GO" id="GO:0030154">
    <property type="term" value="P:cell differentiation"/>
    <property type="evidence" value="ECO:0000318"/>
    <property type="project" value="GO_Central"/>
</dbReference>
<dbReference type="GO" id="GO:0042464">
    <property type="term" value="P:dosage compensation by hypoactivation of X chromosome"/>
    <property type="evidence" value="ECO:0000315"/>
    <property type="project" value="UniProtKB"/>
</dbReference>
<dbReference type="GO" id="GO:0009755">
    <property type="term" value="P:hormone-mediated signaling pathway"/>
    <property type="evidence" value="ECO:0000318"/>
    <property type="project" value="GO_Central"/>
</dbReference>
<dbReference type="GO" id="GO:0030522">
    <property type="term" value="P:intracellular receptor signaling pathway"/>
    <property type="evidence" value="ECO:0000318"/>
    <property type="project" value="GO_Central"/>
</dbReference>
<dbReference type="GO" id="GO:0000122">
    <property type="term" value="P:negative regulation of transcription by RNA polymerase II"/>
    <property type="evidence" value="ECO:0000315"/>
    <property type="project" value="WormBase"/>
</dbReference>
<dbReference type="GO" id="GO:0045944">
    <property type="term" value="P:positive regulation of transcription by RNA polymerase II"/>
    <property type="evidence" value="ECO:0000318"/>
    <property type="project" value="GO_Central"/>
</dbReference>
<dbReference type="GO" id="GO:0007538">
    <property type="term" value="P:primary sex determination"/>
    <property type="evidence" value="ECO:0000315"/>
    <property type="project" value="UniProtKB"/>
</dbReference>
<dbReference type="GO" id="GO:0000381">
    <property type="term" value="P:regulation of alternative mRNA splicing, via spliceosome"/>
    <property type="evidence" value="ECO:0000315"/>
    <property type="project" value="UniProtKB"/>
</dbReference>
<dbReference type="GO" id="GO:0007548">
    <property type="term" value="P:sex differentiation"/>
    <property type="evidence" value="ECO:0007669"/>
    <property type="project" value="UniProtKB-KW"/>
</dbReference>
<dbReference type="CDD" id="cd07165">
    <property type="entry name" value="NR_DBD_DmE78_like"/>
    <property type="match status" value="1"/>
</dbReference>
<dbReference type="CDD" id="cd06942">
    <property type="entry name" value="NR_LBD_Sex_1_like"/>
    <property type="match status" value="1"/>
</dbReference>
<dbReference type="FunFam" id="1.10.565.10:FF:000100">
    <property type="entry name" value="Steroid hormone receptor family member cnr14"/>
    <property type="match status" value="1"/>
</dbReference>
<dbReference type="FunFam" id="3.30.50.10:FF:000081">
    <property type="entry name" value="Steroid hormone receptor family member cnr14"/>
    <property type="match status" value="1"/>
</dbReference>
<dbReference type="Gene3D" id="3.30.50.10">
    <property type="entry name" value="Erythroid Transcription Factor GATA-1, subunit A"/>
    <property type="match status" value="1"/>
</dbReference>
<dbReference type="Gene3D" id="1.10.565.10">
    <property type="entry name" value="Retinoid X Receptor"/>
    <property type="match status" value="1"/>
</dbReference>
<dbReference type="InterPro" id="IPR035500">
    <property type="entry name" value="NHR-like_dom_sf"/>
</dbReference>
<dbReference type="InterPro" id="IPR000536">
    <property type="entry name" value="Nucl_hrmn_rcpt_lig-bd"/>
</dbReference>
<dbReference type="InterPro" id="IPR001723">
    <property type="entry name" value="Nuclear_hrmn_rcpt"/>
</dbReference>
<dbReference type="InterPro" id="IPR001628">
    <property type="entry name" value="Znf_hrmn_rcpt"/>
</dbReference>
<dbReference type="InterPro" id="IPR013088">
    <property type="entry name" value="Znf_NHR/GATA"/>
</dbReference>
<dbReference type="PANTHER" id="PTHR45805">
    <property type="entry name" value="NUCLEAR HORMONE RECEPTOR HR3-RELATED"/>
    <property type="match status" value="1"/>
</dbReference>
<dbReference type="Pfam" id="PF00105">
    <property type="entry name" value="zf-C4"/>
    <property type="match status" value="1"/>
</dbReference>
<dbReference type="PRINTS" id="PR00398">
    <property type="entry name" value="STRDHORMONER"/>
</dbReference>
<dbReference type="PRINTS" id="PR00047">
    <property type="entry name" value="STROIDFINGER"/>
</dbReference>
<dbReference type="SMART" id="SM00430">
    <property type="entry name" value="HOLI"/>
    <property type="match status" value="1"/>
</dbReference>
<dbReference type="SMART" id="SM00399">
    <property type="entry name" value="ZnF_C4"/>
    <property type="match status" value="1"/>
</dbReference>
<dbReference type="SUPFAM" id="SSF57716">
    <property type="entry name" value="Glucocorticoid receptor-like (DNA-binding domain)"/>
    <property type="match status" value="1"/>
</dbReference>
<dbReference type="SUPFAM" id="SSF48508">
    <property type="entry name" value="Nuclear receptor ligand-binding domain"/>
    <property type="match status" value="1"/>
</dbReference>
<dbReference type="PROSITE" id="PS51843">
    <property type="entry name" value="NR_LBD"/>
    <property type="match status" value="1"/>
</dbReference>
<dbReference type="PROSITE" id="PS00031">
    <property type="entry name" value="NUCLEAR_REC_DBD_1"/>
    <property type="match status" value="1"/>
</dbReference>
<dbReference type="PROSITE" id="PS51030">
    <property type="entry name" value="NUCLEAR_REC_DBD_2"/>
    <property type="match status" value="1"/>
</dbReference>
<feature type="chain" id="PRO_0000053523" description="Steroid hormone receptor family member cnr14">
    <location>
        <begin position="1"/>
        <end position="534"/>
    </location>
</feature>
<feature type="domain" description="NR LBD" evidence="2">
    <location>
        <begin position="252"/>
        <end position="493"/>
    </location>
</feature>
<feature type="DNA-binding region" description="Nuclear receptor" evidence="1">
    <location>
        <begin position="148"/>
        <end position="223"/>
    </location>
</feature>
<feature type="zinc finger region" description="NR C4-type" evidence="1">
    <location>
        <begin position="151"/>
        <end position="171"/>
    </location>
</feature>
<feature type="zinc finger region" description="NR C4-type" evidence="1">
    <location>
        <begin position="187"/>
        <end position="211"/>
    </location>
</feature>
<feature type="region of interest" description="Disordered" evidence="3">
    <location>
        <begin position="30"/>
        <end position="53"/>
    </location>
</feature>
<feature type="region of interest" description="Disordered" evidence="3">
    <location>
        <begin position="119"/>
        <end position="139"/>
    </location>
</feature>
<feature type="region of interest" description="Disordered" evidence="3">
    <location>
        <begin position="502"/>
        <end position="534"/>
    </location>
</feature>
<feature type="compositionally biased region" description="Low complexity" evidence="3">
    <location>
        <begin position="119"/>
        <end position="130"/>
    </location>
</feature>
<feature type="compositionally biased region" description="Low complexity" evidence="3">
    <location>
        <begin position="511"/>
        <end position="534"/>
    </location>
</feature>
<keyword id="KW-0221">Differentiation</keyword>
<keyword id="KW-0238">DNA-binding</keyword>
<keyword id="KW-0479">Metal-binding</keyword>
<keyword id="KW-0539">Nucleus</keyword>
<keyword id="KW-0675">Receptor</keyword>
<keyword id="KW-1185">Reference proteome</keyword>
<keyword id="KW-0726">Sexual differentiation</keyword>
<keyword id="KW-0804">Transcription</keyword>
<keyword id="KW-0805">Transcription regulation</keyword>
<keyword id="KW-0862">Zinc</keyword>
<keyword id="KW-0863">Zinc-finger</keyword>
<reference key="1">
    <citation type="journal article" date="1995" name="Proc. Natl. Acad. Sci. U.S.A.">
        <title>Steroid/thyroid hormone receptor genes in Caenorhabditis elegans.</title>
        <authorList>
            <person name="Kostrouch Z."/>
            <person name="Kostrouchova M."/>
            <person name="Rall J.E."/>
        </authorList>
    </citation>
    <scope>NUCLEOTIDE SEQUENCE [MRNA]</scope>
    <source>
        <strain>Bristol N2</strain>
    </source>
</reference>
<reference key="2">
    <citation type="submission" date="1996-02" db="EMBL/GenBank/DDBJ databases">
        <authorList>
            <person name="Kostrouchova M."/>
        </authorList>
    </citation>
    <scope>SEQUENCE REVISION TO C-TERMINUS</scope>
</reference>
<reference key="3">
    <citation type="journal article" date="1998" name="Science">
        <title>Genome sequence of the nematode C. elegans: a platform for investigating biology.</title>
        <authorList>
            <consortium name="The C. elegans sequencing consortium"/>
        </authorList>
    </citation>
    <scope>NUCLEOTIDE SEQUENCE [LARGE SCALE GENOMIC DNA]</scope>
    <source>
        <strain>Bristol N2</strain>
    </source>
</reference>
<reference key="4">
    <citation type="journal article" date="2005" name="Dev. Cell">
        <title>The T-box transcription factor SEA-1 is an autosomal element of the X:A signal that determines C. elegans sex.</title>
        <authorList>
            <person name="Powell J.R."/>
            <person name="Jow M.M."/>
            <person name="Meyer B.J."/>
        </authorList>
    </citation>
    <scope>FUNCTION</scope>
</reference>
<reference key="5">
    <citation type="journal article" date="2007" name="Genetics">
        <title>A ONECUT homeodomain protein communicates X chromosome dose to specify Caenorhabditis elegans sexual fate by repressing a sex switch gene.</title>
        <authorList>
            <person name="Gladden J.M."/>
            <person name="Meyer B.J."/>
        </authorList>
    </citation>
    <scope>FUNCTION</scope>
    <scope>DISRUPTION PHENOTYPE</scope>
</reference>
<reference key="6">
    <citation type="journal article" date="2011" name="Development">
        <title>The zinc-finger protein SEA-2 regulates larval developmental timing and adult lifespan in C. elegans.</title>
        <authorList>
            <person name="Huang X."/>
            <person name="Zhang H."/>
            <person name="Zhang H."/>
        </authorList>
    </citation>
    <scope>FUNCTION</scope>
    <scope>DISRUPTION PHENOTYPE</scope>
</reference>
<reference key="7">
    <citation type="journal article" date="2013" name="Genes Dev.">
        <title>Molecular antagonism between X-chromosome and autosome signals determines nematode sex.</title>
        <authorList>
            <person name="Farboud B."/>
            <person name="Nix P."/>
            <person name="Jow M.M."/>
            <person name="Gladden J.M."/>
            <person name="Meyer B.J."/>
        </authorList>
    </citation>
    <scope>FUNCTION</scope>
    <scope>SUBCELLULAR LOCATION</scope>
</reference>
<reference key="8">
    <citation type="journal article" date="2020" name="Elife">
        <title>Dose-dependent action of the RNA binding protein FOX-1 to relay X-chromosome number and determine C. elegans sex.</title>
        <authorList>
            <person name="Farboud B."/>
            <person name="Novak C.S."/>
            <person name="Nicoll M."/>
            <person name="Quiogue A."/>
            <person name="Meyer B.J."/>
        </authorList>
    </citation>
    <scope>FUNCTION</scope>
    <scope>DISRUPTION PHENOTYPE</scope>
</reference>
<proteinExistence type="evidence at transcript level"/>
<gene>
    <name evidence="11" type="primary">sex-1</name>
    <name evidence="11" type="synonym">cnr-14</name>
    <name evidence="11" type="synonym">nhr-24</name>
    <name evidence="11" type="synonym">nr1g1</name>
    <name evidence="11" type="ORF">F44A6.2</name>
</gene>
<protein>
    <recommendedName>
        <fullName>Steroid hormone receptor family member cnr14</fullName>
    </recommendedName>
    <alternativeName>
        <fullName>Nuclear receptor subfamily 1 group G member 1</fullName>
    </alternativeName>
</protein>
<accession>P41830</accession>
<sequence>MSFETKPNYLLLTNPDTPLSVCTSPYYSPSGKTASIPSSEASKPEGTNGQWSHLPTGATYVTDEFSSEFQIQNGSTAAQSGNANNYADPLSHRRYFNNVNGYNHHQFYDTASQASVSSPATSVTSSLSPPDSLSNGHTTQRHHIGKAISFCKVCGDKASGYHYGVTSCEGCKGFFRRSIQRKIDYRCLKQQVCEIKRESRNRCQYCRFKKCLDSGMSKDSVRQMKFRNAMRDDKSPDSVFVPEISTLERQEEVDAVYEAVLRAHTTFSFYTDIKIRSIVARPFNVRINEDSKMNRLNAWQIYAHEIDVDIKEVVNFVKEIPKFNFINGNDKAVLLRKNAFPLYLLRIVRGMSNRGLMLRDGRLIDFKSLQLLYGSLADEMLAFANHIITIGCTDGDIALFIVLILCQPLTTEQQFSTNFKSQLQLLEMFDFYKKVLFQKMTCRIDGCDTYKQLMKCIHELNRLNELHKQQLNILRENLSFLNLPPLVVEMFQLSTLPLPVNHNNQENQYTPAPEHQSPQPQQPTPNQQQTPVHC</sequence>
<organism>
    <name type="scientific">Caenorhabditis elegans</name>
    <dbReference type="NCBI Taxonomy" id="6239"/>
    <lineage>
        <taxon>Eukaryota</taxon>
        <taxon>Metazoa</taxon>
        <taxon>Ecdysozoa</taxon>
        <taxon>Nematoda</taxon>
        <taxon>Chromadorea</taxon>
        <taxon>Rhabditida</taxon>
        <taxon>Rhabditina</taxon>
        <taxon>Rhabditomorpha</taxon>
        <taxon>Rhabditoidea</taxon>
        <taxon>Rhabditidae</taxon>
        <taxon>Peloderinae</taxon>
        <taxon>Caenorhabditis</taxon>
    </lineage>
</organism>
<comment type="function">
    <text evidence="4 5 6 7 8">Transcriptional regulator which is involved in the sex determination and X chromosome dosage compensation pathways (PubMed:16139225, PubMed:17720939, PubMed:21471153, PubMed:23666922, PubMed:33372658). Directly binds to five 5'-A(G/C)(G/T)(T/G)C(A/G)-3' sites in the promoter of sex-determining factor xol-1 to negatively regulate its expression and promote hermaphrodite development (PubMed:23666922). Together with fox-1 is involved in making the distinction between one and two X-chromosomes (PubMed:21471153, PubMed:23666922, PubMed:33372658). Plays a role in the fox-1-mediated repression of the functionally active isoform (isoform b) of the sex-determining factor xol-1 gene to promote hermaphrodite development (PubMed:33372658). Plays a role in the association of the dosage compensation complex proteins dpy-27 and sdc-3 with the hermaphrodite X chromosomes (PubMed:16139225, PubMed:17720939).</text>
</comment>
<comment type="subcellular location">
    <subcellularLocation>
        <location evidence="10">Nucleus</location>
    </subcellularLocation>
</comment>
<comment type="tissue specificity">
    <text>Most abundant in embryos.</text>
</comment>
<comment type="disruption phenotype">
    <text evidence="5 6 8">RNAi-mediated knockdown results in 43% lethality of hermaphrodites (PubMed:33372658). RNAi-mediated knockdown together with fox-1 results in hermaphrodite embryonic lethality (PubMed:21471153, PubMed:33372658). This hermaphrodite-specific lethality is suppressed in a sea-2 bp283 mutant or sea-1 gk799 mutant background (PubMed:21471153). RNAi-mediated knockdown results in hermaphrodites lethality due to failure of the dosage compensation complex to assemble on X chromosomes in a fox-1 y303 mutant background (PubMed:17720939). RNAi-mediated knockdown in a background containing one copy of the fox-1 gene results in the viability of 3% of hermaphrodites (PubMed:33372658). RNAi-mediated knockdown in a strain where all of the GCACG and GCUAG motifs in intron 6 of the xol-1 gene have been mutated to AUACA and AUAUA, respectively results in the viability of 1% of hermaphrodites (PubMed:33372658). RNAi-mediated knockdown in a strain where all of the GCACG and GCUAG motifs in intron 6 of one copy of the xol-1 gene have been mutated to AUACA and AUAUA, respectively results in the viability of 7% of hermaphrodites (PubMed:33372658). RNAi-mediated knockdown in a strain where all of the GCACG motifs in intron 6 of the xol-1 gene have been mutated to AUACA results in the viability of 24% of hermaphrodites (PubMed:33372658). RNAi-mediated knockdown in a strain where all of the GCACG motifs in intron 6 of one copy of the xol-1 gene have been mutated to AUACA results in the viability of 18% of hermaphrodites (PubMed:33372658). RNAi-mediated knockdown in a strain where all of the GCUAG motifs in intron 6 of the xol-1 gene have been mutated to AUAUA results in the viability of 33% of hermaphrodites (PubMed:33372658). RNAi-mediated knockdown in a strain where all of the GCUAG motifs in intron 6 of one copy of the xol-1 gene have been mutated to AUAUA results in the viability of 13% of hermaphrodites (PubMed:33372658). RNAi-mediated knockdown in a strain where all of the GCACG and GCUAG motifs in intron 6 of the xol-1 gene have been mutated to GCUUG results in the viability of 8% of hermaphrodites (PubMed:33372658). RNAi-mediated knockdown in a strain where all of the GCACG and GCUAG motifs in intron 6 of one copy of the xol-1 gene have been mutated to GCUUG results in the viability of 36% of hermaphrodites (PubMed:33372658). RNAi-mediated knockdown in strains containing five or three fox-1-binding GCACG motifs in intron 6 of the xol-1 gene results in the viability of 49% and 33% of hermaphrodites, respectively (PubMed:33372658).</text>
</comment>
<comment type="similarity">
    <text evidence="9">Belongs to the nuclear hormone receptor family. NR1 subfamily.</text>
</comment>